<keyword id="KW-0456">Lyase</keyword>
<keyword id="KW-1185">Reference proteome</keyword>
<protein>
    <recommendedName>
        <fullName evidence="1">Putative hydro-lyase Arth_3576</fullName>
        <ecNumber evidence="1">4.2.1.-</ecNumber>
    </recommendedName>
</protein>
<gene>
    <name type="ordered locus">Arth_3576</name>
</gene>
<proteinExistence type="inferred from homology"/>
<name>Y3576_ARTS2</name>
<reference key="1">
    <citation type="journal article" date="2013" name="Stand. Genomic Sci.">
        <title>Complete genome sequence of Arthrobacter sp. strain FB24.</title>
        <authorList>
            <person name="Nakatsu C.H."/>
            <person name="Barabote R."/>
            <person name="Thompson S."/>
            <person name="Bruce D."/>
            <person name="Detter C."/>
            <person name="Brettin T."/>
            <person name="Han C."/>
            <person name="Beasley F."/>
            <person name="Chen W."/>
            <person name="Konopka A."/>
            <person name="Xie G."/>
        </authorList>
    </citation>
    <scope>NUCLEOTIDE SEQUENCE [LARGE SCALE GENOMIC DNA]</scope>
    <source>
        <strain>FB24</strain>
    </source>
</reference>
<organism>
    <name type="scientific">Arthrobacter sp. (strain FB24)</name>
    <dbReference type="NCBI Taxonomy" id="290399"/>
    <lineage>
        <taxon>Bacteria</taxon>
        <taxon>Bacillati</taxon>
        <taxon>Actinomycetota</taxon>
        <taxon>Actinomycetes</taxon>
        <taxon>Micrococcales</taxon>
        <taxon>Micrococcaceae</taxon>
        <taxon>Arthrobacter</taxon>
    </lineage>
</organism>
<dbReference type="EC" id="4.2.1.-" evidence="1"/>
<dbReference type="EMBL" id="CP000454">
    <property type="protein sequence ID" value="ABK04951.1"/>
    <property type="molecule type" value="Genomic_DNA"/>
</dbReference>
<dbReference type="RefSeq" id="WP_011693401.1">
    <property type="nucleotide sequence ID" value="NC_008541.1"/>
</dbReference>
<dbReference type="SMR" id="A0K0Y1"/>
<dbReference type="STRING" id="290399.Arth_3576"/>
<dbReference type="KEGG" id="art:Arth_3576"/>
<dbReference type="eggNOG" id="COG4336">
    <property type="taxonomic scope" value="Bacteria"/>
</dbReference>
<dbReference type="HOGENOM" id="CLU_059759_0_0_11"/>
<dbReference type="Proteomes" id="UP000000754">
    <property type="component" value="Chromosome"/>
</dbReference>
<dbReference type="GO" id="GO:0016829">
    <property type="term" value="F:lyase activity"/>
    <property type="evidence" value="ECO:0007669"/>
    <property type="project" value="UniProtKB-KW"/>
</dbReference>
<dbReference type="FunFam" id="3.30.2040.10:FF:000001">
    <property type="entry name" value="D-glutamate cyclase, mitochondrial"/>
    <property type="match status" value="1"/>
</dbReference>
<dbReference type="Gene3D" id="3.40.1640.10">
    <property type="entry name" value="PSTPO5379-like"/>
    <property type="match status" value="1"/>
</dbReference>
<dbReference type="Gene3D" id="3.30.2040.10">
    <property type="entry name" value="PSTPO5379-like domain"/>
    <property type="match status" value="1"/>
</dbReference>
<dbReference type="HAMAP" id="MF_01830">
    <property type="entry name" value="Hydro_lyase"/>
    <property type="match status" value="1"/>
</dbReference>
<dbReference type="InterPro" id="IPR009906">
    <property type="entry name" value="D-Glu_cyclase"/>
</dbReference>
<dbReference type="InterPro" id="IPR038021">
    <property type="entry name" value="Putative_hydro-lyase"/>
</dbReference>
<dbReference type="InterPro" id="IPR016938">
    <property type="entry name" value="UPF0317"/>
</dbReference>
<dbReference type="NCBIfam" id="NF003969">
    <property type="entry name" value="PRK05463.1"/>
    <property type="match status" value="1"/>
</dbReference>
<dbReference type="PANTHER" id="PTHR32022">
    <property type="entry name" value="D-GLUTAMATE CYCLASE, MITOCHONDRIAL"/>
    <property type="match status" value="1"/>
</dbReference>
<dbReference type="PANTHER" id="PTHR32022:SF10">
    <property type="entry name" value="D-GLUTAMATE CYCLASE, MITOCHONDRIAL"/>
    <property type="match status" value="1"/>
</dbReference>
<dbReference type="Pfam" id="PF07286">
    <property type="entry name" value="D-Glu_cyclase"/>
    <property type="match status" value="1"/>
</dbReference>
<dbReference type="PIRSF" id="PIRSF029755">
    <property type="entry name" value="UCP029755"/>
    <property type="match status" value="1"/>
</dbReference>
<dbReference type="SUPFAM" id="SSF160920">
    <property type="entry name" value="PSTPO5379-like"/>
    <property type="match status" value="1"/>
</dbReference>
<accession>A0K0Y1</accession>
<comment type="similarity">
    <text evidence="1">Belongs to the D-glutamate cyclase family.</text>
</comment>
<sequence>MNQATALMAPSDARLKFRNGLVTPTSGWSDGYTQANLIAVAADYADEFIEFCRLNPKACPVIDIIPAGRHESVLAAGSDIRSDVPAYRIWVDGELADEVTDATSVWRDDMVGVLIGCSFTFEAALASEGIPLRHTETGRNVPMYRTNIECTPAGRIHGPMVVSMRPMLPGLVDTAIRVTSEVPKVHGSPVHVGSPEDLGIADINRPDFGDAVEIRPGEVPVFWACGVTPQSAVMASRPSFAISHAPGHMFITDVPESNYREPAGVSL</sequence>
<feature type="chain" id="PRO_0000379817" description="Putative hydro-lyase Arth_3576">
    <location>
        <begin position="1"/>
        <end position="267"/>
    </location>
</feature>
<evidence type="ECO:0000255" key="1">
    <source>
        <dbReference type="HAMAP-Rule" id="MF_01830"/>
    </source>
</evidence>